<gene>
    <name type="primary">dsbE</name>
    <name type="synonym">ccmG</name>
    <name type="ordered locus">XF_2461</name>
</gene>
<keyword id="KW-0997">Cell inner membrane</keyword>
<keyword id="KW-1003">Cell membrane</keyword>
<keyword id="KW-0201">Cytochrome c-type biogenesis</keyword>
<keyword id="KW-1015">Disulfide bond</keyword>
<keyword id="KW-0472">Membrane</keyword>
<keyword id="KW-0676">Redox-active center</keyword>
<keyword id="KW-0812">Transmembrane</keyword>
<keyword id="KW-1133">Transmembrane helix</keyword>
<sequence length="197" mass="21704">MSDSPRRFPTPLLLTGVMGVLILIALLTFTLMRSWDNAPDQSALLGKPAPNFSLPLLHDPSLQISNTDLAGAPYLLHVWGSWCAACATEQPVLTHFALSKRVRVIGYNWKDRREDALQWLEQLGNPYLAVVSDPEGKTAMDWGVTAAPTTFLIDGRGIVRWHHKGALNQQIIEHKLLPILADIEHSPTAAPALHQAP</sequence>
<proteinExistence type="inferred from homology"/>
<dbReference type="EMBL" id="AE003849">
    <property type="protein sequence ID" value="AAF85260.1"/>
    <property type="molecule type" value="Genomic_DNA"/>
</dbReference>
<dbReference type="PIR" id="A82556">
    <property type="entry name" value="A82556"/>
</dbReference>
<dbReference type="RefSeq" id="WP_010894905.1">
    <property type="nucleotide sequence ID" value="NC_002488.3"/>
</dbReference>
<dbReference type="SMR" id="Q9PAN4"/>
<dbReference type="STRING" id="160492.XF_2461"/>
<dbReference type="KEGG" id="xfa:XF_2461"/>
<dbReference type="eggNOG" id="COG0526">
    <property type="taxonomic scope" value="Bacteria"/>
</dbReference>
<dbReference type="HOGENOM" id="CLU_042529_19_1_6"/>
<dbReference type="Proteomes" id="UP000000812">
    <property type="component" value="Chromosome"/>
</dbReference>
<dbReference type="GO" id="GO:0030288">
    <property type="term" value="C:outer membrane-bounded periplasmic space"/>
    <property type="evidence" value="ECO:0007669"/>
    <property type="project" value="InterPro"/>
</dbReference>
<dbReference type="GO" id="GO:0005886">
    <property type="term" value="C:plasma membrane"/>
    <property type="evidence" value="ECO:0007669"/>
    <property type="project" value="UniProtKB-SubCell"/>
</dbReference>
<dbReference type="GO" id="GO:0015036">
    <property type="term" value="F:disulfide oxidoreductase activity"/>
    <property type="evidence" value="ECO:0007669"/>
    <property type="project" value="InterPro"/>
</dbReference>
<dbReference type="GO" id="GO:0017004">
    <property type="term" value="P:cytochrome complex assembly"/>
    <property type="evidence" value="ECO:0007669"/>
    <property type="project" value="UniProtKB-KW"/>
</dbReference>
<dbReference type="CDD" id="cd03010">
    <property type="entry name" value="TlpA_like_DsbE"/>
    <property type="match status" value="1"/>
</dbReference>
<dbReference type="Gene3D" id="3.40.30.10">
    <property type="entry name" value="Glutaredoxin"/>
    <property type="match status" value="1"/>
</dbReference>
<dbReference type="InterPro" id="IPR004799">
    <property type="entry name" value="Periplasmic_diS_OxRdtase_DsbE"/>
</dbReference>
<dbReference type="InterPro" id="IPR013740">
    <property type="entry name" value="Redoxin"/>
</dbReference>
<dbReference type="InterPro" id="IPR036249">
    <property type="entry name" value="Thioredoxin-like_sf"/>
</dbReference>
<dbReference type="InterPro" id="IPR017937">
    <property type="entry name" value="Thioredoxin_CS"/>
</dbReference>
<dbReference type="InterPro" id="IPR013766">
    <property type="entry name" value="Thioredoxin_domain"/>
</dbReference>
<dbReference type="InterPro" id="IPR050553">
    <property type="entry name" value="Thioredoxin_ResA/DsbE_sf"/>
</dbReference>
<dbReference type="NCBIfam" id="TIGR00385">
    <property type="entry name" value="dsbE"/>
    <property type="match status" value="1"/>
</dbReference>
<dbReference type="PANTHER" id="PTHR42852">
    <property type="entry name" value="THIOL:DISULFIDE INTERCHANGE PROTEIN DSBE"/>
    <property type="match status" value="1"/>
</dbReference>
<dbReference type="PANTHER" id="PTHR42852:SF6">
    <property type="entry name" value="THIOL:DISULFIDE INTERCHANGE PROTEIN DSBE"/>
    <property type="match status" value="1"/>
</dbReference>
<dbReference type="Pfam" id="PF08534">
    <property type="entry name" value="Redoxin"/>
    <property type="match status" value="1"/>
</dbReference>
<dbReference type="SUPFAM" id="SSF52833">
    <property type="entry name" value="Thioredoxin-like"/>
    <property type="match status" value="1"/>
</dbReference>
<dbReference type="PROSITE" id="PS00194">
    <property type="entry name" value="THIOREDOXIN_1"/>
    <property type="match status" value="1"/>
</dbReference>
<dbReference type="PROSITE" id="PS51352">
    <property type="entry name" value="THIOREDOXIN_2"/>
    <property type="match status" value="1"/>
</dbReference>
<protein>
    <recommendedName>
        <fullName>Thiol:disulfide interchange protein DsbE</fullName>
    </recommendedName>
    <alternativeName>
        <fullName>Cytochrome c biogenesis protein CcmG</fullName>
    </alternativeName>
</protein>
<accession>Q9PAN4</accession>
<organism>
    <name type="scientific">Xylella fastidiosa (strain 9a5c)</name>
    <dbReference type="NCBI Taxonomy" id="160492"/>
    <lineage>
        <taxon>Bacteria</taxon>
        <taxon>Pseudomonadati</taxon>
        <taxon>Pseudomonadota</taxon>
        <taxon>Gammaproteobacteria</taxon>
        <taxon>Lysobacterales</taxon>
        <taxon>Lysobacteraceae</taxon>
        <taxon>Xylella</taxon>
    </lineage>
</organism>
<feature type="chain" id="PRO_0000201304" description="Thiol:disulfide interchange protein DsbE">
    <location>
        <begin position="1"/>
        <end position="197"/>
    </location>
</feature>
<feature type="topological domain" description="Cytoplasmic" evidence="2">
    <location>
        <begin position="1"/>
        <end position="11"/>
    </location>
</feature>
<feature type="transmembrane region" description="Helical" evidence="2">
    <location>
        <begin position="12"/>
        <end position="32"/>
    </location>
</feature>
<feature type="topological domain" description="Periplasmic" evidence="2">
    <location>
        <begin position="33"/>
        <end position="197"/>
    </location>
</feature>
<feature type="domain" description="Thioredoxin" evidence="3">
    <location>
        <begin position="43"/>
        <end position="181"/>
    </location>
</feature>
<feature type="disulfide bond" description="Redox-active" evidence="3">
    <location>
        <begin position="83"/>
        <end position="86"/>
    </location>
</feature>
<evidence type="ECO:0000250" key="1"/>
<evidence type="ECO:0000255" key="2"/>
<evidence type="ECO:0000255" key="3">
    <source>
        <dbReference type="PROSITE-ProRule" id="PRU00691"/>
    </source>
</evidence>
<evidence type="ECO:0000305" key="4"/>
<comment type="function">
    <text evidence="1">Involved in disulfide bond formation. Catalyzes a late, reductive step in the assembly of periplasmic c-type cytochromes, probably the reduction of disulfide bonds of the apocytochrome c to allow covalent linkage with the heme. Possible subunit of a heme lyase (By similarity).</text>
</comment>
<comment type="subcellular location">
    <subcellularLocation>
        <location evidence="1">Cell inner membrane</location>
        <topology evidence="1">Single-pass membrane protein</topology>
        <orientation evidence="1">Periplasmic side</orientation>
    </subcellularLocation>
</comment>
<comment type="similarity">
    <text evidence="4">Belongs to the thioredoxin family. DsbE subfamily.</text>
</comment>
<reference key="1">
    <citation type="journal article" date="2000" name="Nature">
        <title>The genome sequence of the plant pathogen Xylella fastidiosa.</title>
        <authorList>
            <person name="Simpson A.J.G."/>
            <person name="Reinach F.C."/>
            <person name="Arruda P."/>
            <person name="Abreu F.A."/>
            <person name="Acencio M."/>
            <person name="Alvarenga R."/>
            <person name="Alves L.M.C."/>
            <person name="Araya J.E."/>
            <person name="Baia G.S."/>
            <person name="Baptista C.S."/>
            <person name="Barros M.H."/>
            <person name="Bonaccorsi E.D."/>
            <person name="Bordin S."/>
            <person name="Bove J.M."/>
            <person name="Briones M.R.S."/>
            <person name="Bueno M.R.P."/>
            <person name="Camargo A.A."/>
            <person name="Camargo L.E.A."/>
            <person name="Carraro D.M."/>
            <person name="Carrer H."/>
            <person name="Colauto N.B."/>
            <person name="Colombo C."/>
            <person name="Costa F.F."/>
            <person name="Costa M.C.R."/>
            <person name="Costa-Neto C.M."/>
            <person name="Coutinho L.L."/>
            <person name="Cristofani M."/>
            <person name="Dias-Neto E."/>
            <person name="Docena C."/>
            <person name="El-Dorry H."/>
            <person name="Facincani A.P."/>
            <person name="Ferreira A.J.S."/>
            <person name="Ferreira V.C.A."/>
            <person name="Ferro J.A."/>
            <person name="Fraga J.S."/>
            <person name="Franca S.C."/>
            <person name="Franco M.C."/>
            <person name="Frohme M."/>
            <person name="Furlan L.R."/>
            <person name="Garnier M."/>
            <person name="Goldman G.H."/>
            <person name="Goldman M.H.S."/>
            <person name="Gomes S.L."/>
            <person name="Gruber A."/>
            <person name="Ho P.L."/>
            <person name="Hoheisel J.D."/>
            <person name="Junqueira M.L."/>
            <person name="Kemper E.L."/>
            <person name="Kitajima J.P."/>
            <person name="Krieger J.E."/>
            <person name="Kuramae E.E."/>
            <person name="Laigret F."/>
            <person name="Lambais M.R."/>
            <person name="Leite L.C.C."/>
            <person name="Lemos E.G.M."/>
            <person name="Lemos M.V.F."/>
            <person name="Lopes S.A."/>
            <person name="Lopes C.R."/>
            <person name="Machado J.A."/>
            <person name="Machado M.A."/>
            <person name="Madeira A.M.B.N."/>
            <person name="Madeira H.M.F."/>
            <person name="Marino C.L."/>
            <person name="Marques M.V."/>
            <person name="Martins E.A.L."/>
            <person name="Martins E.M.F."/>
            <person name="Matsukuma A.Y."/>
            <person name="Menck C.F.M."/>
            <person name="Miracca E.C."/>
            <person name="Miyaki C.Y."/>
            <person name="Monteiro-Vitorello C.B."/>
            <person name="Moon D.H."/>
            <person name="Nagai M.A."/>
            <person name="Nascimento A.L.T.O."/>
            <person name="Netto L.E.S."/>
            <person name="Nhani A. Jr."/>
            <person name="Nobrega F.G."/>
            <person name="Nunes L.R."/>
            <person name="Oliveira M.A."/>
            <person name="de Oliveira M.C."/>
            <person name="de Oliveira R.C."/>
            <person name="Palmieri D.A."/>
            <person name="Paris A."/>
            <person name="Peixoto B.R."/>
            <person name="Pereira G.A.G."/>
            <person name="Pereira H.A. Jr."/>
            <person name="Pesquero J.B."/>
            <person name="Quaggio R.B."/>
            <person name="Roberto P.G."/>
            <person name="Rodrigues V."/>
            <person name="de Rosa A.J.M."/>
            <person name="de Rosa V.E. Jr."/>
            <person name="de Sa R.G."/>
            <person name="Santelli R.V."/>
            <person name="Sawasaki H.E."/>
            <person name="da Silva A.C.R."/>
            <person name="da Silva A.M."/>
            <person name="da Silva F.R."/>
            <person name="Silva W.A. Jr."/>
            <person name="da Silveira J.F."/>
            <person name="Silvestri M.L.Z."/>
            <person name="Siqueira W.J."/>
            <person name="de Souza A.A."/>
            <person name="de Souza A.P."/>
            <person name="Terenzi M.F."/>
            <person name="Truffi D."/>
            <person name="Tsai S.M."/>
            <person name="Tsuhako M.H."/>
            <person name="Vallada H."/>
            <person name="Van Sluys M.A."/>
            <person name="Verjovski-Almeida S."/>
            <person name="Vettore A.L."/>
            <person name="Zago M.A."/>
            <person name="Zatz M."/>
            <person name="Meidanis J."/>
            <person name="Setubal J.C."/>
        </authorList>
    </citation>
    <scope>NUCLEOTIDE SEQUENCE [LARGE SCALE GENOMIC DNA]</scope>
    <source>
        <strain>9a5c</strain>
    </source>
</reference>
<name>DSBE_XYLFA</name>